<evidence type="ECO:0000255" key="1">
    <source>
        <dbReference type="HAMAP-Rule" id="MF_01200"/>
    </source>
</evidence>
<gene>
    <name evidence="1" type="primary">pyrF</name>
    <name type="ordered locus">RHOS4_30160</name>
    <name type="ORF">RSP_1404</name>
</gene>
<keyword id="KW-0210">Decarboxylase</keyword>
<keyword id="KW-0456">Lyase</keyword>
<keyword id="KW-0665">Pyrimidine biosynthesis</keyword>
<keyword id="KW-1185">Reference proteome</keyword>
<accession>Q3IY00</accession>
<protein>
    <recommendedName>
        <fullName evidence="1">Orotidine 5'-phosphate decarboxylase</fullName>
        <ecNumber evidence="1">4.1.1.23</ecNumber>
    </recommendedName>
    <alternativeName>
        <fullName evidence="1">OMP decarboxylase</fullName>
        <shortName evidence="1">OMPDCase</shortName>
        <shortName evidence="1">OMPdecase</shortName>
    </alternativeName>
</protein>
<organism>
    <name type="scientific">Cereibacter sphaeroides (strain ATCC 17023 / DSM 158 / JCM 6121 / CCUG 31486 / LMG 2827 / NBRC 12203 / NCIMB 8253 / ATH 2.4.1.)</name>
    <name type="common">Rhodobacter sphaeroides</name>
    <dbReference type="NCBI Taxonomy" id="272943"/>
    <lineage>
        <taxon>Bacteria</taxon>
        <taxon>Pseudomonadati</taxon>
        <taxon>Pseudomonadota</taxon>
        <taxon>Alphaproteobacteria</taxon>
        <taxon>Rhodobacterales</taxon>
        <taxon>Paracoccaceae</taxon>
        <taxon>Cereibacter</taxon>
    </lineage>
</organism>
<reference key="1">
    <citation type="submission" date="2005-09" db="EMBL/GenBank/DDBJ databases">
        <title>Complete sequence of chromosome 1 of Rhodobacter sphaeroides 2.4.1.</title>
        <authorList>
            <person name="Copeland A."/>
            <person name="Lucas S."/>
            <person name="Lapidus A."/>
            <person name="Barry K."/>
            <person name="Detter J.C."/>
            <person name="Glavina T."/>
            <person name="Hammon N."/>
            <person name="Israni S."/>
            <person name="Pitluck S."/>
            <person name="Richardson P."/>
            <person name="Mackenzie C."/>
            <person name="Choudhary M."/>
            <person name="Larimer F."/>
            <person name="Hauser L.J."/>
            <person name="Land M."/>
            <person name="Donohue T.J."/>
            <person name="Kaplan S."/>
        </authorList>
    </citation>
    <scope>NUCLEOTIDE SEQUENCE [LARGE SCALE GENOMIC DNA]</scope>
    <source>
        <strain>ATCC 17023 / DSM 158 / JCM 6121 / CCUG 31486 / LMG 2827 / NBRC 12203 / NCIMB 8253 / ATH 2.4.1.</strain>
    </source>
</reference>
<comment type="function">
    <text evidence="1">Catalyzes the decarboxylation of orotidine 5'-monophosphate (OMP) to uridine 5'-monophosphate (UMP).</text>
</comment>
<comment type="catalytic activity">
    <reaction evidence="1">
        <text>orotidine 5'-phosphate + H(+) = UMP + CO2</text>
        <dbReference type="Rhea" id="RHEA:11596"/>
        <dbReference type="ChEBI" id="CHEBI:15378"/>
        <dbReference type="ChEBI" id="CHEBI:16526"/>
        <dbReference type="ChEBI" id="CHEBI:57538"/>
        <dbReference type="ChEBI" id="CHEBI:57865"/>
        <dbReference type="EC" id="4.1.1.23"/>
    </reaction>
</comment>
<comment type="pathway">
    <text evidence="1">Pyrimidine metabolism; UMP biosynthesis via de novo pathway; UMP from orotate: step 2/2.</text>
</comment>
<comment type="subunit">
    <text evidence="1">Homodimer.</text>
</comment>
<comment type="similarity">
    <text evidence="1">Belongs to the OMP decarboxylase family. Type 1 subfamily.</text>
</comment>
<feature type="chain" id="PRO_0000241897" description="Orotidine 5'-phosphate decarboxylase">
    <location>
        <begin position="1"/>
        <end position="232"/>
    </location>
</feature>
<feature type="active site" description="Proton donor" evidence="1">
    <location>
        <position position="63"/>
    </location>
</feature>
<feature type="binding site" evidence="1">
    <location>
        <position position="11"/>
    </location>
    <ligand>
        <name>substrate</name>
    </ligand>
</feature>
<feature type="binding site" evidence="1">
    <location>
        <position position="33"/>
    </location>
    <ligand>
        <name>substrate</name>
    </ligand>
</feature>
<feature type="binding site" evidence="1">
    <location>
        <begin position="61"/>
        <end position="70"/>
    </location>
    <ligand>
        <name>substrate</name>
    </ligand>
</feature>
<feature type="binding site" evidence="1">
    <location>
        <position position="116"/>
    </location>
    <ligand>
        <name>substrate</name>
    </ligand>
</feature>
<feature type="binding site" evidence="1">
    <location>
        <position position="179"/>
    </location>
    <ligand>
        <name>substrate</name>
    </ligand>
</feature>
<feature type="binding site" evidence="1">
    <location>
        <position position="188"/>
    </location>
    <ligand>
        <name>substrate</name>
    </ligand>
</feature>
<feature type="binding site" evidence="1">
    <location>
        <position position="208"/>
    </location>
    <ligand>
        <name>substrate</name>
    </ligand>
</feature>
<feature type="binding site" evidence="1">
    <location>
        <position position="209"/>
    </location>
    <ligand>
        <name>substrate</name>
    </ligand>
</feature>
<sequence length="232" mass="24023">MADDRLIVALDVPNVVQGLDLAERLGDAVSFYKIGLGMLTGGGLALANELKQERGKRIFLDMKLFDIGATVEAAVRGFASYDLDFLTVHGDPQVVRAAVQGASGSGLRILAVTVLTSLDRADLDANMIRAGDLAEITLERAARALDAGAHGVIASPQEAAAIRALPQAAGRLIVTPGVRPTGAALGDQKRVATPARAIADGADHIVVGRPIWQAGDPRAAALAVQAELPTRG</sequence>
<name>PYRF_CERS4</name>
<dbReference type="EC" id="4.1.1.23" evidence="1"/>
<dbReference type="EMBL" id="CP000143">
    <property type="protein sequence ID" value="ABA80584.2"/>
    <property type="molecule type" value="Genomic_DNA"/>
</dbReference>
<dbReference type="RefSeq" id="WP_017140020.1">
    <property type="nucleotide sequence ID" value="NC_007493.2"/>
</dbReference>
<dbReference type="RefSeq" id="YP_354485.2">
    <property type="nucleotide sequence ID" value="NC_007493.2"/>
</dbReference>
<dbReference type="SMR" id="Q3IY00"/>
<dbReference type="STRING" id="272943.RSP_1404"/>
<dbReference type="EnsemblBacteria" id="ABA80584">
    <property type="protein sequence ID" value="ABA80584"/>
    <property type="gene ID" value="RSP_1404"/>
</dbReference>
<dbReference type="GeneID" id="3718492"/>
<dbReference type="KEGG" id="rsp:RSP_1404"/>
<dbReference type="PATRIC" id="fig|272943.9.peg.3387"/>
<dbReference type="eggNOG" id="COG0284">
    <property type="taxonomic scope" value="Bacteria"/>
</dbReference>
<dbReference type="OrthoDB" id="9806203at2"/>
<dbReference type="UniPathway" id="UPA00070">
    <property type="reaction ID" value="UER00120"/>
</dbReference>
<dbReference type="Proteomes" id="UP000002703">
    <property type="component" value="Chromosome 1"/>
</dbReference>
<dbReference type="GO" id="GO:0005829">
    <property type="term" value="C:cytosol"/>
    <property type="evidence" value="ECO:0007669"/>
    <property type="project" value="TreeGrafter"/>
</dbReference>
<dbReference type="GO" id="GO:0004590">
    <property type="term" value="F:orotidine-5'-phosphate decarboxylase activity"/>
    <property type="evidence" value="ECO:0007669"/>
    <property type="project" value="UniProtKB-UniRule"/>
</dbReference>
<dbReference type="GO" id="GO:0006207">
    <property type="term" value="P:'de novo' pyrimidine nucleobase biosynthetic process"/>
    <property type="evidence" value="ECO:0007669"/>
    <property type="project" value="InterPro"/>
</dbReference>
<dbReference type="GO" id="GO:0044205">
    <property type="term" value="P:'de novo' UMP biosynthetic process"/>
    <property type="evidence" value="ECO:0007669"/>
    <property type="project" value="UniProtKB-UniRule"/>
</dbReference>
<dbReference type="CDD" id="cd04725">
    <property type="entry name" value="OMP_decarboxylase_like"/>
    <property type="match status" value="1"/>
</dbReference>
<dbReference type="Gene3D" id="3.20.20.70">
    <property type="entry name" value="Aldolase class I"/>
    <property type="match status" value="1"/>
</dbReference>
<dbReference type="HAMAP" id="MF_01200_B">
    <property type="entry name" value="OMPdecase_type1_B"/>
    <property type="match status" value="1"/>
</dbReference>
<dbReference type="InterPro" id="IPR013785">
    <property type="entry name" value="Aldolase_TIM"/>
</dbReference>
<dbReference type="InterPro" id="IPR014732">
    <property type="entry name" value="OMPdecase"/>
</dbReference>
<dbReference type="InterPro" id="IPR018089">
    <property type="entry name" value="OMPdecase_AS"/>
</dbReference>
<dbReference type="InterPro" id="IPR047596">
    <property type="entry name" value="OMPdecase_bac"/>
</dbReference>
<dbReference type="InterPro" id="IPR001754">
    <property type="entry name" value="OMPdeCOase_dom"/>
</dbReference>
<dbReference type="InterPro" id="IPR011060">
    <property type="entry name" value="RibuloseP-bd_barrel"/>
</dbReference>
<dbReference type="NCBIfam" id="NF001273">
    <property type="entry name" value="PRK00230.1"/>
    <property type="match status" value="1"/>
</dbReference>
<dbReference type="NCBIfam" id="TIGR01740">
    <property type="entry name" value="pyrF"/>
    <property type="match status" value="1"/>
</dbReference>
<dbReference type="PANTHER" id="PTHR32119">
    <property type="entry name" value="OROTIDINE 5'-PHOSPHATE DECARBOXYLASE"/>
    <property type="match status" value="1"/>
</dbReference>
<dbReference type="PANTHER" id="PTHR32119:SF2">
    <property type="entry name" value="OROTIDINE 5'-PHOSPHATE DECARBOXYLASE"/>
    <property type="match status" value="1"/>
</dbReference>
<dbReference type="Pfam" id="PF00215">
    <property type="entry name" value="OMPdecase"/>
    <property type="match status" value="1"/>
</dbReference>
<dbReference type="SMART" id="SM00934">
    <property type="entry name" value="OMPdecase"/>
    <property type="match status" value="1"/>
</dbReference>
<dbReference type="SUPFAM" id="SSF51366">
    <property type="entry name" value="Ribulose-phoshate binding barrel"/>
    <property type="match status" value="1"/>
</dbReference>
<dbReference type="PROSITE" id="PS00156">
    <property type="entry name" value="OMPDECASE"/>
    <property type="match status" value="1"/>
</dbReference>
<proteinExistence type="inferred from homology"/>